<protein>
    <recommendedName>
        <fullName evidence="1">Serine--tRNA ligase</fullName>
        <ecNumber evidence="1">6.1.1.11</ecNumber>
    </recommendedName>
    <alternativeName>
        <fullName evidence="1">Seryl-tRNA synthetase</fullName>
        <shortName evidence="1">SerRS</shortName>
    </alternativeName>
    <alternativeName>
        <fullName evidence="1">Seryl-tRNA(Ser/Sec) synthetase</fullName>
    </alternativeName>
</protein>
<keyword id="KW-0030">Aminoacyl-tRNA synthetase</keyword>
<keyword id="KW-0067">ATP-binding</keyword>
<keyword id="KW-0963">Cytoplasm</keyword>
<keyword id="KW-0436">Ligase</keyword>
<keyword id="KW-0547">Nucleotide-binding</keyword>
<keyword id="KW-0648">Protein biosynthesis</keyword>
<keyword id="KW-1185">Reference proteome</keyword>
<proteinExistence type="inferred from homology"/>
<reference key="1">
    <citation type="journal article" date="2005" name="Proc. Natl. Acad. Sci. U.S.A.">
        <title>Complete genome sequence of Vibrio fischeri: a symbiotic bacterium with pathogenic congeners.</title>
        <authorList>
            <person name="Ruby E.G."/>
            <person name="Urbanowski M."/>
            <person name="Campbell J."/>
            <person name="Dunn A."/>
            <person name="Faini M."/>
            <person name="Gunsalus R."/>
            <person name="Lostroh P."/>
            <person name="Lupp C."/>
            <person name="McCann J."/>
            <person name="Millikan D."/>
            <person name="Schaefer A."/>
            <person name="Stabb E."/>
            <person name="Stevens A."/>
            <person name="Visick K."/>
            <person name="Whistler C."/>
            <person name="Greenberg E.P."/>
        </authorList>
    </citation>
    <scope>NUCLEOTIDE SEQUENCE [LARGE SCALE GENOMIC DNA]</scope>
    <source>
        <strain>ATCC 700601 / ES114</strain>
    </source>
</reference>
<feature type="chain" id="PRO_0000122154" description="Serine--tRNA ligase">
    <location>
        <begin position="1"/>
        <end position="435"/>
    </location>
</feature>
<feature type="region of interest" description="Disordered" evidence="2">
    <location>
        <begin position="41"/>
        <end position="70"/>
    </location>
</feature>
<feature type="compositionally biased region" description="Polar residues" evidence="2">
    <location>
        <begin position="49"/>
        <end position="58"/>
    </location>
</feature>
<feature type="binding site" evidence="1">
    <location>
        <begin position="242"/>
        <end position="244"/>
    </location>
    <ligand>
        <name>L-serine</name>
        <dbReference type="ChEBI" id="CHEBI:33384"/>
    </ligand>
</feature>
<feature type="binding site" evidence="1">
    <location>
        <begin position="273"/>
        <end position="275"/>
    </location>
    <ligand>
        <name>ATP</name>
        <dbReference type="ChEBI" id="CHEBI:30616"/>
    </ligand>
</feature>
<feature type="binding site" evidence="1">
    <location>
        <position position="296"/>
    </location>
    <ligand>
        <name>L-serine</name>
        <dbReference type="ChEBI" id="CHEBI:33384"/>
    </ligand>
</feature>
<feature type="binding site" evidence="1">
    <location>
        <begin position="360"/>
        <end position="363"/>
    </location>
    <ligand>
        <name>ATP</name>
        <dbReference type="ChEBI" id="CHEBI:30616"/>
    </ligand>
</feature>
<feature type="binding site" evidence="1">
    <location>
        <position position="396"/>
    </location>
    <ligand>
        <name>L-serine</name>
        <dbReference type="ChEBI" id="CHEBI:33384"/>
    </ligand>
</feature>
<comment type="function">
    <text evidence="1">Catalyzes the attachment of serine to tRNA(Ser). Is also able to aminoacylate tRNA(Sec) with serine, to form the misacylated tRNA L-seryl-tRNA(Sec), which will be further converted into selenocysteinyl-tRNA(Sec).</text>
</comment>
<comment type="catalytic activity">
    <reaction evidence="1">
        <text>tRNA(Ser) + L-serine + ATP = L-seryl-tRNA(Ser) + AMP + diphosphate + H(+)</text>
        <dbReference type="Rhea" id="RHEA:12292"/>
        <dbReference type="Rhea" id="RHEA-COMP:9669"/>
        <dbReference type="Rhea" id="RHEA-COMP:9703"/>
        <dbReference type="ChEBI" id="CHEBI:15378"/>
        <dbReference type="ChEBI" id="CHEBI:30616"/>
        <dbReference type="ChEBI" id="CHEBI:33019"/>
        <dbReference type="ChEBI" id="CHEBI:33384"/>
        <dbReference type="ChEBI" id="CHEBI:78442"/>
        <dbReference type="ChEBI" id="CHEBI:78533"/>
        <dbReference type="ChEBI" id="CHEBI:456215"/>
        <dbReference type="EC" id="6.1.1.11"/>
    </reaction>
</comment>
<comment type="catalytic activity">
    <reaction evidence="1">
        <text>tRNA(Sec) + L-serine + ATP = L-seryl-tRNA(Sec) + AMP + diphosphate + H(+)</text>
        <dbReference type="Rhea" id="RHEA:42580"/>
        <dbReference type="Rhea" id="RHEA-COMP:9742"/>
        <dbReference type="Rhea" id="RHEA-COMP:10128"/>
        <dbReference type="ChEBI" id="CHEBI:15378"/>
        <dbReference type="ChEBI" id="CHEBI:30616"/>
        <dbReference type="ChEBI" id="CHEBI:33019"/>
        <dbReference type="ChEBI" id="CHEBI:33384"/>
        <dbReference type="ChEBI" id="CHEBI:78442"/>
        <dbReference type="ChEBI" id="CHEBI:78533"/>
        <dbReference type="ChEBI" id="CHEBI:456215"/>
        <dbReference type="EC" id="6.1.1.11"/>
    </reaction>
</comment>
<comment type="pathway">
    <text evidence="1">Aminoacyl-tRNA biosynthesis; selenocysteinyl-tRNA(Sec) biosynthesis; L-seryl-tRNA(Sec) from L-serine and tRNA(Sec): step 1/1.</text>
</comment>
<comment type="subunit">
    <text evidence="1">Homodimer. The tRNA molecule binds across the dimer.</text>
</comment>
<comment type="subcellular location">
    <subcellularLocation>
        <location evidence="1">Cytoplasm</location>
    </subcellularLocation>
</comment>
<comment type="domain">
    <text evidence="1">Consists of two distinct domains, a catalytic core and a N-terminal extension that is involved in tRNA binding.</text>
</comment>
<comment type="similarity">
    <text evidence="1">Belongs to the class-II aminoacyl-tRNA synthetase family. Type-1 seryl-tRNA synthetase subfamily.</text>
</comment>
<name>SYS_ALIF1</name>
<accession>Q5E6E3</accession>
<sequence length="435" mass="48959">MLDSKLLRTELDETAEKLARRGFKLDVETLRNLEEQRKSLQVKTEELQAQRNSRSKSIGQAKAKGDHEEADRIMADVANLGSELDEAKAALAELQQQIEDIALSVPNIPDDSVPLGKDENENVEVLRWGTPLAYDFEVKDHVDLGEMADGLDFASAVKISGSRFIVMKGQFARLHRALSQFMLDLHTEEHGYTEMYVPYLVNPDSLFGTGQLPKFGEDLFHTSPLTEQVSDVPLKKLSLIPTAEVPVTNMVRDTITDEADMPLKMTAHTPCFRSEAGSYGRDTRGLIRMHQFDKVELVQITKPEDSMAALEELTGHAEKVLQLLELPYRKVVLCTGDMGFGSRKTYDLEVWVPAQETYREISSCSNMWDFQARRMQARFRRKGEKKPELVHTLNGSGLAVGRTMVAILENFQQADGKIAIPQVLRKYMNGVEFIG</sequence>
<organism>
    <name type="scientific">Aliivibrio fischeri (strain ATCC 700601 / ES114)</name>
    <name type="common">Vibrio fischeri</name>
    <dbReference type="NCBI Taxonomy" id="312309"/>
    <lineage>
        <taxon>Bacteria</taxon>
        <taxon>Pseudomonadati</taxon>
        <taxon>Pseudomonadota</taxon>
        <taxon>Gammaproteobacteria</taxon>
        <taxon>Vibrionales</taxon>
        <taxon>Vibrionaceae</taxon>
        <taxon>Aliivibrio</taxon>
    </lineage>
</organism>
<dbReference type="EC" id="6.1.1.11" evidence="1"/>
<dbReference type="EMBL" id="CP000020">
    <property type="protein sequence ID" value="AAW85403.1"/>
    <property type="molecule type" value="Genomic_DNA"/>
</dbReference>
<dbReference type="RefSeq" id="WP_011261568.1">
    <property type="nucleotide sequence ID" value="NC_006840.2"/>
</dbReference>
<dbReference type="RefSeq" id="YP_204291.1">
    <property type="nucleotide sequence ID" value="NC_006840.2"/>
</dbReference>
<dbReference type="SMR" id="Q5E6E3"/>
<dbReference type="STRING" id="312309.VF_0908"/>
<dbReference type="EnsemblBacteria" id="AAW85403">
    <property type="protein sequence ID" value="AAW85403"/>
    <property type="gene ID" value="VF_0908"/>
</dbReference>
<dbReference type="GeneID" id="54163576"/>
<dbReference type="KEGG" id="vfi:VF_0908"/>
<dbReference type="PATRIC" id="fig|312309.11.peg.904"/>
<dbReference type="eggNOG" id="COG0172">
    <property type="taxonomic scope" value="Bacteria"/>
</dbReference>
<dbReference type="HOGENOM" id="CLU_023797_1_1_6"/>
<dbReference type="OrthoDB" id="9804647at2"/>
<dbReference type="UniPathway" id="UPA00906">
    <property type="reaction ID" value="UER00895"/>
</dbReference>
<dbReference type="Proteomes" id="UP000000537">
    <property type="component" value="Chromosome I"/>
</dbReference>
<dbReference type="GO" id="GO:0005737">
    <property type="term" value="C:cytoplasm"/>
    <property type="evidence" value="ECO:0007669"/>
    <property type="project" value="UniProtKB-SubCell"/>
</dbReference>
<dbReference type="GO" id="GO:0005524">
    <property type="term" value="F:ATP binding"/>
    <property type="evidence" value="ECO:0007669"/>
    <property type="project" value="UniProtKB-UniRule"/>
</dbReference>
<dbReference type="GO" id="GO:0004828">
    <property type="term" value="F:serine-tRNA ligase activity"/>
    <property type="evidence" value="ECO:0007669"/>
    <property type="project" value="UniProtKB-UniRule"/>
</dbReference>
<dbReference type="GO" id="GO:0016260">
    <property type="term" value="P:selenocysteine biosynthetic process"/>
    <property type="evidence" value="ECO:0007669"/>
    <property type="project" value="UniProtKB-UniRule"/>
</dbReference>
<dbReference type="GO" id="GO:0006434">
    <property type="term" value="P:seryl-tRNA aminoacylation"/>
    <property type="evidence" value="ECO:0007669"/>
    <property type="project" value="UniProtKB-UniRule"/>
</dbReference>
<dbReference type="CDD" id="cd00770">
    <property type="entry name" value="SerRS_core"/>
    <property type="match status" value="1"/>
</dbReference>
<dbReference type="FunFam" id="3.30.930.10:FF:000018">
    <property type="entry name" value="Serine--tRNA ligase"/>
    <property type="match status" value="1"/>
</dbReference>
<dbReference type="Gene3D" id="3.30.930.10">
    <property type="entry name" value="Bira Bifunctional Protein, Domain 2"/>
    <property type="match status" value="1"/>
</dbReference>
<dbReference type="Gene3D" id="1.10.287.40">
    <property type="entry name" value="Serine-tRNA synthetase, tRNA binding domain"/>
    <property type="match status" value="1"/>
</dbReference>
<dbReference type="HAMAP" id="MF_00176">
    <property type="entry name" value="Ser_tRNA_synth_type1"/>
    <property type="match status" value="1"/>
</dbReference>
<dbReference type="InterPro" id="IPR002314">
    <property type="entry name" value="aa-tRNA-synt_IIb"/>
</dbReference>
<dbReference type="InterPro" id="IPR006195">
    <property type="entry name" value="aa-tRNA-synth_II"/>
</dbReference>
<dbReference type="InterPro" id="IPR045864">
    <property type="entry name" value="aa-tRNA-synth_II/BPL/LPL"/>
</dbReference>
<dbReference type="InterPro" id="IPR002317">
    <property type="entry name" value="Ser-tRNA-ligase_type_1"/>
</dbReference>
<dbReference type="InterPro" id="IPR015866">
    <property type="entry name" value="Ser-tRNA-synth_1_N"/>
</dbReference>
<dbReference type="InterPro" id="IPR042103">
    <property type="entry name" value="SerRS_1_N_sf"/>
</dbReference>
<dbReference type="InterPro" id="IPR033729">
    <property type="entry name" value="SerRS_core"/>
</dbReference>
<dbReference type="InterPro" id="IPR010978">
    <property type="entry name" value="tRNA-bd_arm"/>
</dbReference>
<dbReference type="NCBIfam" id="TIGR00414">
    <property type="entry name" value="serS"/>
    <property type="match status" value="1"/>
</dbReference>
<dbReference type="PANTHER" id="PTHR43697:SF1">
    <property type="entry name" value="SERINE--TRNA LIGASE"/>
    <property type="match status" value="1"/>
</dbReference>
<dbReference type="PANTHER" id="PTHR43697">
    <property type="entry name" value="SERYL-TRNA SYNTHETASE"/>
    <property type="match status" value="1"/>
</dbReference>
<dbReference type="Pfam" id="PF02403">
    <property type="entry name" value="Seryl_tRNA_N"/>
    <property type="match status" value="1"/>
</dbReference>
<dbReference type="Pfam" id="PF00587">
    <property type="entry name" value="tRNA-synt_2b"/>
    <property type="match status" value="1"/>
</dbReference>
<dbReference type="PIRSF" id="PIRSF001529">
    <property type="entry name" value="Ser-tRNA-synth_IIa"/>
    <property type="match status" value="1"/>
</dbReference>
<dbReference type="PRINTS" id="PR00981">
    <property type="entry name" value="TRNASYNTHSER"/>
</dbReference>
<dbReference type="SUPFAM" id="SSF55681">
    <property type="entry name" value="Class II aaRS and biotin synthetases"/>
    <property type="match status" value="1"/>
</dbReference>
<dbReference type="SUPFAM" id="SSF46589">
    <property type="entry name" value="tRNA-binding arm"/>
    <property type="match status" value="1"/>
</dbReference>
<dbReference type="PROSITE" id="PS50862">
    <property type="entry name" value="AA_TRNA_LIGASE_II"/>
    <property type="match status" value="1"/>
</dbReference>
<gene>
    <name evidence="1" type="primary">serS</name>
    <name type="ordered locus">VF_0908</name>
</gene>
<evidence type="ECO:0000255" key="1">
    <source>
        <dbReference type="HAMAP-Rule" id="MF_00176"/>
    </source>
</evidence>
<evidence type="ECO:0000256" key="2">
    <source>
        <dbReference type="SAM" id="MobiDB-lite"/>
    </source>
</evidence>